<feature type="chain" id="PRO_1000085845" description="Type III pantothenate kinase">
    <location>
        <begin position="1"/>
        <end position="247"/>
    </location>
</feature>
<feature type="active site" description="Proton acceptor" evidence="1">
    <location>
        <position position="104"/>
    </location>
</feature>
<feature type="binding site" evidence="1">
    <location>
        <begin position="6"/>
        <end position="13"/>
    </location>
    <ligand>
        <name>ATP</name>
        <dbReference type="ChEBI" id="CHEBI:30616"/>
    </ligand>
</feature>
<feature type="binding site" evidence="1">
    <location>
        <begin position="102"/>
        <end position="105"/>
    </location>
    <ligand>
        <name>substrate</name>
    </ligand>
</feature>
<feature type="binding site" evidence="1">
    <location>
        <position position="122"/>
    </location>
    <ligand>
        <name>K(+)</name>
        <dbReference type="ChEBI" id="CHEBI:29103"/>
    </ligand>
</feature>
<feature type="binding site" evidence="1">
    <location>
        <position position="125"/>
    </location>
    <ligand>
        <name>ATP</name>
        <dbReference type="ChEBI" id="CHEBI:30616"/>
    </ligand>
</feature>
<feature type="binding site" evidence="1">
    <location>
        <position position="176"/>
    </location>
    <ligand>
        <name>substrate</name>
    </ligand>
</feature>
<evidence type="ECO:0000255" key="1">
    <source>
        <dbReference type="HAMAP-Rule" id="MF_01274"/>
    </source>
</evidence>
<sequence>MIILFDVGNTSIYTGLSNGTNIDETFRMNTDIHKSPDEYFVTLKSFIDPNVITGVIIGSVVPLVTQALIALTEKYLKLKPVVIEPGTKTGIFVKADNPREVGADLIANAAGLDNPHPTLIIDLGTANKLIYVKNQMITGVIIAPGLQLSIHALDGNTALLHEVDIKVPKKYLGNNTIHCIQSGVVYGTIVMIEGMFGRIREEVGEDFDVIITGGLSSLILEHIRLDIKQDKELVLKGLLNIYKKNIK</sequence>
<organism>
    <name type="scientific">Acholeplasma laidlawii (strain PG-8A)</name>
    <dbReference type="NCBI Taxonomy" id="441768"/>
    <lineage>
        <taxon>Bacteria</taxon>
        <taxon>Bacillati</taxon>
        <taxon>Mycoplasmatota</taxon>
        <taxon>Mollicutes</taxon>
        <taxon>Acholeplasmatales</taxon>
        <taxon>Acholeplasmataceae</taxon>
        <taxon>Acholeplasma</taxon>
    </lineage>
</organism>
<comment type="function">
    <text evidence="1">Catalyzes the phosphorylation of pantothenate (Pan), the first step in CoA biosynthesis.</text>
</comment>
<comment type="catalytic activity">
    <reaction evidence="1">
        <text>(R)-pantothenate + ATP = (R)-4'-phosphopantothenate + ADP + H(+)</text>
        <dbReference type="Rhea" id="RHEA:16373"/>
        <dbReference type="ChEBI" id="CHEBI:10986"/>
        <dbReference type="ChEBI" id="CHEBI:15378"/>
        <dbReference type="ChEBI" id="CHEBI:29032"/>
        <dbReference type="ChEBI" id="CHEBI:30616"/>
        <dbReference type="ChEBI" id="CHEBI:456216"/>
        <dbReference type="EC" id="2.7.1.33"/>
    </reaction>
</comment>
<comment type="cofactor">
    <cofactor evidence="1">
        <name>NH4(+)</name>
        <dbReference type="ChEBI" id="CHEBI:28938"/>
    </cofactor>
    <cofactor evidence="1">
        <name>K(+)</name>
        <dbReference type="ChEBI" id="CHEBI:29103"/>
    </cofactor>
    <text evidence="1">A monovalent cation. Ammonium or potassium.</text>
</comment>
<comment type="pathway">
    <text evidence="1">Cofactor biosynthesis; coenzyme A biosynthesis; CoA from (R)-pantothenate: step 1/5.</text>
</comment>
<comment type="subunit">
    <text evidence="1">Homodimer.</text>
</comment>
<comment type="subcellular location">
    <subcellularLocation>
        <location evidence="1">Cytoplasm</location>
    </subcellularLocation>
</comment>
<comment type="similarity">
    <text evidence="1">Belongs to the type III pantothenate kinase family.</text>
</comment>
<gene>
    <name evidence="1" type="primary">coaX</name>
    <name type="ordered locus">ACL_0850</name>
</gene>
<name>COAX_ACHLI</name>
<keyword id="KW-0067">ATP-binding</keyword>
<keyword id="KW-0173">Coenzyme A biosynthesis</keyword>
<keyword id="KW-0963">Cytoplasm</keyword>
<keyword id="KW-0418">Kinase</keyword>
<keyword id="KW-0479">Metal-binding</keyword>
<keyword id="KW-0547">Nucleotide-binding</keyword>
<keyword id="KW-0630">Potassium</keyword>
<keyword id="KW-1185">Reference proteome</keyword>
<keyword id="KW-0808">Transferase</keyword>
<protein>
    <recommendedName>
        <fullName evidence="1">Type III pantothenate kinase</fullName>
        <ecNumber evidence="1">2.7.1.33</ecNumber>
    </recommendedName>
    <alternativeName>
        <fullName evidence="1">PanK-III</fullName>
    </alternativeName>
    <alternativeName>
        <fullName evidence="1">Pantothenic acid kinase</fullName>
    </alternativeName>
</protein>
<proteinExistence type="inferred from homology"/>
<accession>A9NGI4</accession>
<reference key="1">
    <citation type="journal article" date="2011" name="J. Bacteriol.">
        <title>Complete genome and proteome of Acholeplasma laidlawii.</title>
        <authorList>
            <person name="Lazarev V.N."/>
            <person name="Levitskii S.A."/>
            <person name="Basovskii Y.I."/>
            <person name="Chukin M.M."/>
            <person name="Akopian T.A."/>
            <person name="Vereshchagin V.V."/>
            <person name="Kostrjukova E.S."/>
            <person name="Kovaleva G.Y."/>
            <person name="Kazanov M.D."/>
            <person name="Malko D.B."/>
            <person name="Vitreschak A.G."/>
            <person name="Sernova N.V."/>
            <person name="Gelfand M.S."/>
            <person name="Demina I.A."/>
            <person name="Serebryakova M.V."/>
            <person name="Galyamina M.A."/>
            <person name="Vtyurin N.N."/>
            <person name="Rogov S.I."/>
            <person name="Alexeev D.G."/>
            <person name="Ladygina V.G."/>
            <person name="Govorun V.M."/>
        </authorList>
    </citation>
    <scope>NUCLEOTIDE SEQUENCE [LARGE SCALE GENOMIC DNA]</scope>
    <source>
        <strain>PG-8A</strain>
    </source>
</reference>
<dbReference type="EC" id="2.7.1.33" evidence="1"/>
<dbReference type="EMBL" id="CP000896">
    <property type="protein sequence ID" value="ABX81464.1"/>
    <property type="molecule type" value="Genomic_DNA"/>
</dbReference>
<dbReference type="RefSeq" id="WP_012242795.1">
    <property type="nucleotide sequence ID" value="NC_010163.1"/>
</dbReference>
<dbReference type="SMR" id="A9NGI4"/>
<dbReference type="STRING" id="441768.ACL_0850"/>
<dbReference type="GeneID" id="41339005"/>
<dbReference type="KEGG" id="acl:ACL_0850"/>
<dbReference type="eggNOG" id="COG1521">
    <property type="taxonomic scope" value="Bacteria"/>
</dbReference>
<dbReference type="HOGENOM" id="CLU_066627_1_0_14"/>
<dbReference type="OrthoDB" id="9804707at2"/>
<dbReference type="UniPathway" id="UPA00241">
    <property type="reaction ID" value="UER00352"/>
</dbReference>
<dbReference type="Proteomes" id="UP000008558">
    <property type="component" value="Chromosome"/>
</dbReference>
<dbReference type="GO" id="GO:0005737">
    <property type="term" value="C:cytoplasm"/>
    <property type="evidence" value="ECO:0007669"/>
    <property type="project" value="UniProtKB-SubCell"/>
</dbReference>
<dbReference type="GO" id="GO:0005524">
    <property type="term" value="F:ATP binding"/>
    <property type="evidence" value="ECO:0007669"/>
    <property type="project" value="UniProtKB-UniRule"/>
</dbReference>
<dbReference type="GO" id="GO:0046872">
    <property type="term" value="F:metal ion binding"/>
    <property type="evidence" value="ECO:0007669"/>
    <property type="project" value="UniProtKB-KW"/>
</dbReference>
<dbReference type="GO" id="GO:0004594">
    <property type="term" value="F:pantothenate kinase activity"/>
    <property type="evidence" value="ECO:0007669"/>
    <property type="project" value="UniProtKB-UniRule"/>
</dbReference>
<dbReference type="GO" id="GO:0015937">
    <property type="term" value="P:coenzyme A biosynthetic process"/>
    <property type="evidence" value="ECO:0007669"/>
    <property type="project" value="UniProtKB-UniRule"/>
</dbReference>
<dbReference type="CDD" id="cd24015">
    <property type="entry name" value="ASKHA_NBD_PanK-III"/>
    <property type="match status" value="1"/>
</dbReference>
<dbReference type="Gene3D" id="3.30.420.40">
    <property type="match status" value="2"/>
</dbReference>
<dbReference type="HAMAP" id="MF_01274">
    <property type="entry name" value="Pantothen_kinase_3"/>
    <property type="match status" value="1"/>
</dbReference>
<dbReference type="InterPro" id="IPR043129">
    <property type="entry name" value="ATPase_NBD"/>
</dbReference>
<dbReference type="InterPro" id="IPR004619">
    <property type="entry name" value="Type_III_PanK"/>
</dbReference>
<dbReference type="NCBIfam" id="TIGR00671">
    <property type="entry name" value="baf"/>
    <property type="match status" value="1"/>
</dbReference>
<dbReference type="PANTHER" id="PTHR34265">
    <property type="entry name" value="TYPE III PANTOTHENATE KINASE"/>
    <property type="match status" value="1"/>
</dbReference>
<dbReference type="PANTHER" id="PTHR34265:SF1">
    <property type="entry name" value="TYPE III PANTOTHENATE KINASE"/>
    <property type="match status" value="1"/>
</dbReference>
<dbReference type="Pfam" id="PF03309">
    <property type="entry name" value="Pan_kinase"/>
    <property type="match status" value="1"/>
</dbReference>
<dbReference type="SUPFAM" id="SSF53067">
    <property type="entry name" value="Actin-like ATPase domain"/>
    <property type="match status" value="2"/>
</dbReference>